<protein>
    <recommendedName>
        <fullName evidence="1">Porphobilinogen deaminase</fullName>
        <shortName evidence="1">PBG</shortName>
        <ecNumber evidence="1">2.5.1.61</ecNumber>
    </recommendedName>
    <alternativeName>
        <fullName evidence="1">Hydroxymethylbilane synthase</fullName>
        <shortName evidence="1">HMBS</shortName>
    </alternativeName>
    <alternativeName>
        <fullName evidence="1">Pre-uroporphyrinogen synthase</fullName>
    </alternativeName>
</protein>
<organism>
    <name type="scientific">Escherichia coli O45:K1 (strain S88 / ExPEC)</name>
    <dbReference type="NCBI Taxonomy" id="585035"/>
    <lineage>
        <taxon>Bacteria</taxon>
        <taxon>Pseudomonadati</taxon>
        <taxon>Pseudomonadota</taxon>
        <taxon>Gammaproteobacteria</taxon>
        <taxon>Enterobacterales</taxon>
        <taxon>Enterobacteriaceae</taxon>
        <taxon>Escherichia</taxon>
    </lineage>
</organism>
<sequence length="313" mass="33822">MLDNVLRIATRQSPLALWQAHYVKDKLMASHPGLVVELVPMVTRGDVILDTPLAKVGGKGLFVKELEVALLENRADIAVHSMKDVPVEFPQGLGLVTICKREDPRDAFVSNTYDSLDALPAGSIVGTSSLRRQCQLAERRPDLIIRSLRGNVGTRLSKLDNGEYDAIILAVAGLKRLGLESRIRAALPPEISLPAVGQGAVGIECRLDDARTRELLAALNHHETALRVTAERAMNTRLEGGCQVPIGSYAELIDGEIWLRALVGAPDGSQIIRGERRGAPQDAEQMGISLAEELLNNGAREILAEVYNGDAPA</sequence>
<feature type="chain" id="PRO_1000119214" description="Porphobilinogen deaminase">
    <location>
        <begin position="1"/>
        <end position="313"/>
    </location>
</feature>
<feature type="modified residue" description="S-(dipyrrolylmethanemethyl)cysteine" evidence="1">
    <location>
        <position position="242"/>
    </location>
</feature>
<gene>
    <name evidence="1" type="primary">hemC</name>
    <name type="ordered locus">ECS88_4227</name>
</gene>
<name>HEM3_ECO45</name>
<evidence type="ECO:0000255" key="1">
    <source>
        <dbReference type="HAMAP-Rule" id="MF_00260"/>
    </source>
</evidence>
<proteinExistence type="inferred from homology"/>
<comment type="function">
    <text evidence="1">Tetrapolymerization of the monopyrrole PBG into the hydroxymethylbilane pre-uroporphyrinogen in several discrete steps.</text>
</comment>
<comment type="catalytic activity">
    <reaction evidence="1">
        <text>4 porphobilinogen + H2O = hydroxymethylbilane + 4 NH4(+)</text>
        <dbReference type="Rhea" id="RHEA:13185"/>
        <dbReference type="ChEBI" id="CHEBI:15377"/>
        <dbReference type="ChEBI" id="CHEBI:28938"/>
        <dbReference type="ChEBI" id="CHEBI:57845"/>
        <dbReference type="ChEBI" id="CHEBI:58126"/>
        <dbReference type="EC" id="2.5.1.61"/>
    </reaction>
</comment>
<comment type="cofactor">
    <cofactor evidence="1">
        <name>dipyrromethane</name>
        <dbReference type="ChEBI" id="CHEBI:60342"/>
    </cofactor>
    <text evidence="1">Binds 1 dipyrromethane group covalently.</text>
</comment>
<comment type="pathway">
    <text evidence="1">Porphyrin-containing compound metabolism; protoporphyrin-IX biosynthesis; coproporphyrinogen-III from 5-aminolevulinate: step 2/4.</text>
</comment>
<comment type="subunit">
    <text evidence="1">Monomer.</text>
</comment>
<comment type="miscellaneous">
    <text evidence="1">The porphobilinogen subunits are added to the dipyrromethane group.</text>
</comment>
<comment type="similarity">
    <text evidence="1">Belongs to the HMBS family.</text>
</comment>
<keyword id="KW-0627">Porphyrin biosynthesis</keyword>
<keyword id="KW-1185">Reference proteome</keyword>
<keyword id="KW-0808">Transferase</keyword>
<dbReference type="EC" id="2.5.1.61" evidence="1"/>
<dbReference type="EMBL" id="CU928161">
    <property type="protein sequence ID" value="CAR05420.1"/>
    <property type="molecule type" value="Genomic_DNA"/>
</dbReference>
<dbReference type="RefSeq" id="WP_001350879.1">
    <property type="nucleotide sequence ID" value="NC_011742.1"/>
</dbReference>
<dbReference type="SMR" id="B7MH66"/>
<dbReference type="KEGG" id="ecz:ECS88_4227"/>
<dbReference type="HOGENOM" id="CLU_019704_0_2_6"/>
<dbReference type="UniPathway" id="UPA00251">
    <property type="reaction ID" value="UER00319"/>
</dbReference>
<dbReference type="Proteomes" id="UP000000747">
    <property type="component" value="Chromosome"/>
</dbReference>
<dbReference type="GO" id="GO:0005737">
    <property type="term" value="C:cytoplasm"/>
    <property type="evidence" value="ECO:0007669"/>
    <property type="project" value="TreeGrafter"/>
</dbReference>
<dbReference type="GO" id="GO:0004418">
    <property type="term" value="F:hydroxymethylbilane synthase activity"/>
    <property type="evidence" value="ECO:0007669"/>
    <property type="project" value="UniProtKB-UniRule"/>
</dbReference>
<dbReference type="GO" id="GO:0006782">
    <property type="term" value="P:protoporphyrinogen IX biosynthetic process"/>
    <property type="evidence" value="ECO:0007669"/>
    <property type="project" value="UniProtKB-UniRule"/>
</dbReference>
<dbReference type="CDD" id="cd13646">
    <property type="entry name" value="PBP2_EcHMBS_like"/>
    <property type="match status" value="1"/>
</dbReference>
<dbReference type="FunFam" id="3.30.160.40:FF:000002">
    <property type="entry name" value="Porphobilinogen deaminase"/>
    <property type="match status" value="1"/>
</dbReference>
<dbReference type="FunFam" id="3.40.190.10:FF:000004">
    <property type="entry name" value="Porphobilinogen deaminase"/>
    <property type="match status" value="1"/>
</dbReference>
<dbReference type="FunFam" id="3.40.190.10:FF:000005">
    <property type="entry name" value="Porphobilinogen deaminase"/>
    <property type="match status" value="1"/>
</dbReference>
<dbReference type="Gene3D" id="3.40.190.10">
    <property type="entry name" value="Periplasmic binding protein-like II"/>
    <property type="match status" value="2"/>
</dbReference>
<dbReference type="Gene3D" id="3.30.160.40">
    <property type="entry name" value="Porphobilinogen deaminase, C-terminal domain"/>
    <property type="match status" value="1"/>
</dbReference>
<dbReference type="HAMAP" id="MF_00260">
    <property type="entry name" value="Porphobil_deam"/>
    <property type="match status" value="1"/>
</dbReference>
<dbReference type="InterPro" id="IPR000860">
    <property type="entry name" value="HemC"/>
</dbReference>
<dbReference type="InterPro" id="IPR022419">
    <property type="entry name" value="Porphobilin_deaminase_cofac_BS"/>
</dbReference>
<dbReference type="InterPro" id="IPR022417">
    <property type="entry name" value="Porphobilin_deaminase_N"/>
</dbReference>
<dbReference type="InterPro" id="IPR022418">
    <property type="entry name" value="Porphobilinogen_deaminase_C"/>
</dbReference>
<dbReference type="InterPro" id="IPR036803">
    <property type="entry name" value="Porphobilinogen_deaminase_C_sf"/>
</dbReference>
<dbReference type="NCBIfam" id="TIGR00212">
    <property type="entry name" value="hemC"/>
    <property type="match status" value="1"/>
</dbReference>
<dbReference type="PANTHER" id="PTHR11557">
    <property type="entry name" value="PORPHOBILINOGEN DEAMINASE"/>
    <property type="match status" value="1"/>
</dbReference>
<dbReference type="PANTHER" id="PTHR11557:SF0">
    <property type="entry name" value="PORPHOBILINOGEN DEAMINASE"/>
    <property type="match status" value="1"/>
</dbReference>
<dbReference type="Pfam" id="PF01379">
    <property type="entry name" value="Porphobil_deam"/>
    <property type="match status" value="1"/>
</dbReference>
<dbReference type="Pfam" id="PF03900">
    <property type="entry name" value="Porphobil_deamC"/>
    <property type="match status" value="1"/>
</dbReference>
<dbReference type="PIRSF" id="PIRSF001438">
    <property type="entry name" value="4pyrrol_synth_OHMeBilane_synth"/>
    <property type="match status" value="1"/>
</dbReference>
<dbReference type="PRINTS" id="PR00151">
    <property type="entry name" value="PORPHBDMNASE"/>
</dbReference>
<dbReference type="SUPFAM" id="SSF53850">
    <property type="entry name" value="Periplasmic binding protein-like II"/>
    <property type="match status" value="1"/>
</dbReference>
<dbReference type="SUPFAM" id="SSF54782">
    <property type="entry name" value="Porphobilinogen deaminase (hydroxymethylbilane synthase), C-terminal domain"/>
    <property type="match status" value="1"/>
</dbReference>
<dbReference type="PROSITE" id="PS00533">
    <property type="entry name" value="PORPHOBILINOGEN_DEAM"/>
    <property type="match status" value="1"/>
</dbReference>
<reference key="1">
    <citation type="journal article" date="2009" name="PLoS Genet.">
        <title>Organised genome dynamics in the Escherichia coli species results in highly diverse adaptive paths.</title>
        <authorList>
            <person name="Touchon M."/>
            <person name="Hoede C."/>
            <person name="Tenaillon O."/>
            <person name="Barbe V."/>
            <person name="Baeriswyl S."/>
            <person name="Bidet P."/>
            <person name="Bingen E."/>
            <person name="Bonacorsi S."/>
            <person name="Bouchier C."/>
            <person name="Bouvet O."/>
            <person name="Calteau A."/>
            <person name="Chiapello H."/>
            <person name="Clermont O."/>
            <person name="Cruveiller S."/>
            <person name="Danchin A."/>
            <person name="Diard M."/>
            <person name="Dossat C."/>
            <person name="Karoui M.E."/>
            <person name="Frapy E."/>
            <person name="Garry L."/>
            <person name="Ghigo J.M."/>
            <person name="Gilles A.M."/>
            <person name="Johnson J."/>
            <person name="Le Bouguenec C."/>
            <person name="Lescat M."/>
            <person name="Mangenot S."/>
            <person name="Martinez-Jehanne V."/>
            <person name="Matic I."/>
            <person name="Nassif X."/>
            <person name="Oztas S."/>
            <person name="Petit M.A."/>
            <person name="Pichon C."/>
            <person name="Rouy Z."/>
            <person name="Ruf C.S."/>
            <person name="Schneider D."/>
            <person name="Tourret J."/>
            <person name="Vacherie B."/>
            <person name="Vallenet D."/>
            <person name="Medigue C."/>
            <person name="Rocha E.P.C."/>
            <person name="Denamur E."/>
        </authorList>
    </citation>
    <scope>NUCLEOTIDE SEQUENCE [LARGE SCALE GENOMIC DNA]</scope>
    <source>
        <strain>S88 / ExPEC</strain>
    </source>
</reference>
<accession>B7MH66</accession>